<feature type="chain" id="PRO_0000109203" description="UDP-N-acetylglucosamine--N-acetylmuramyl-(pentapeptide) pyrophosphoryl-undecaprenol N-acetylglucosamine transferase">
    <location>
        <begin position="1"/>
        <end position="376"/>
    </location>
</feature>
<feature type="binding site" evidence="1">
    <location>
        <begin position="11"/>
        <end position="13"/>
    </location>
    <ligand>
        <name>UDP-N-acetyl-alpha-D-glucosamine</name>
        <dbReference type="ChEBI" id="CHEBI:57705"/>
    </ligand>
</feature>
<feature type="binding site" evidence="1">
    <location>
        <position position="117"/>
    </location>
    <ligand>
        <name>UDP-N-acetyl-alpha-D-glucosamine</name>
        <dbReference type="ChEBI" id="CHEBI:57705"/>
    </ligand>
</feature>
<feature type="binding site" evidence="1">
    <location>
        <position position="160"/>
    </location>
    <ligand>
        <name>UDP-N-acetyl-alpha-D-glucosamine</name>
        <dbReference type="ChEBI" id="CHEBI:57705"/>
    </ligand>
</feature>
<feature type="binding site" evidence="1">
    <location>
        <position position="208"/>
    </location>
    <ligand>
        <name>UDP-N-acetyl-alpha-D-glucosamine</name>
        <dbReference type="ChEBI" id="CHEBI:57705"/>
    </ligand>
</feature>
<feature type="binding site" evidence="1">
    <location>
        <position position="310"/>
    </location>
    <ligand>
        <name>UDP-N-acetyl-alpha-D-glucosamine</name>
        <dbReference type="ChEBI" id="CHEBI:57705"/>
    </ligand>
</feature>
<organism>
    <name type="scientific">Rickettsia conorii (strain ATCC VR-613 / Malish 7)</name>
    <dbReference type="NCBI Taxonomy" id="272944"/>
    <lineage>
        <taxon>Bacteria</taxon>
        <taxon>Pseudomonadati</taxon>
        <taxon>Pseudomonadota</taxon>
        <taxon>Alphaproteobacteria</taxon>
        <taxon>Rickettsiales</taxon>
        <taxon>Rickettsiaceae</taxon>
        <taxon>Rickettsieae</taxon>
        <taxon>Rickettsia</taxon>
        <taxon>spotted fever group</taxon>
    </lineage>
</organism>
<comment type="function">
    <text evidence="1">Cell wall formation. Catalyzes the transfer of a GlcNAc subunit on undecaprenyl-pyrophosphoryl-MurNAc-pentapeptide (lipid intermediate I) to form undecaprenyl-pyrophosphoryl-MurNAc-(pentapeptide)GlcNAc (lipid intermediate II).</text>
</comment>
<comment type="catalytic activity">
    <reaction evidence="1">
        <text>di-trans,octa-cis-undecaprenyl diphospho-N-acetyl-alpha-D-muramoyl-L-alanyl-D-glutamyl-meso-2,6-diaminopimeloyl-D-alanyl-D-alanine + UDP-N-acetyl-alpha-D-glucosamine = di-trans,octa-cis-undecaprenyl diphospho-[N-acetyl-alpha-D-glucosaminyl-(1-&gt;4)]-N-acetyl-alpha-D-muramoyl-L-alanyl-D-glutamyl-meso-2,6-diaminopimeloyl-D-alanyl-D-alanine + UDP + H(+)</text>
        <dbReference type="Rhea" id="RHEA:31227"/>
        <dbReference type="ChEBI" id="CHEBI:15378"/>
        <dbReference type="ChEBI" id="CHEBI:57705"/>
        <dbReference type="ChEBI" id="CHEBI:58223"/>
        <dbReference type="ChEBI" id="CHEBI:61387"/>
        <dbReference type="ChEBI" id="CHEBI:61388"/>
        <dbReference type="EC" id="2.4.1.227"/>
    </reaction>
</comment>
<comment type="pathway">
    <text evidence="1">Cell wall biogenesis; peptidoglycan biosynthesis.</text>
</comment>
<comment type="subcellular location">
    <subcellularLocation>
        <location evidence="1">Cell inner membrane</location>
        <topology evidence="1">Peripheral membrane protein</topology>
        <orientation evidence="1">Cytoplasmic side</orientation>
    </subcellularLocation>
</comment>
<comment type="similarity">
    <text evidence="1">Belongs to the glycosyltransferase 28 family. MurG subfamily.</text>
</comment>
<gene>
    <name evidence="1" type="primary">murG</name>
    <name type="ordered locus">RC0562</name>
</gene>
<sequence length="376" mass="42036">MKKIILVAGGTGGHFFPAVALGEELIKRGYEVHFITDLRCKQYIKQDMKVIFHILDLKRSGNIFLFLPRLSIAVLKAIKLLYNMKPSVTVGFGGYPVIAPMFAAIFLRVPIIIHEQNSYLGKVNKFFASFAKKIAISYAKIKNLPEFAKSKIVVTGGVVRENIRELKVIEMSSRGLTTGSKKSLIKALDSVVKPRNDKLFTIFIFGGSQGAKLFSELIPASIQILMQKQPSLELNIIQQAALDDQVKIKDIYSKLNITYAFAEFFDNMALQYKEADLVISRAGASTIEELTYIGLPAIFIPLPSAADNHQYYNAQLLEDEKTGWCLEQNNISAGKLADKILELISNPKILEDASQNLLKRRKEGHKLLSNLIEEVI</sequence>
<dbReference type="EC" id="2.4.1.227" evidence="1"/>
<dbReference type="EMBL" id="AE006914">
    <property type="protein sequence ID" value="AAL03100.1"/>
    <property type="molecule type" value="Genomic_DNA"/>
</dbReference>
<dbReference type="PIR" id="B97770">
    <property type="entry name" value="B97770"/>
</dbReference>
<dbReference type="RefSeq" id="WP_010977197.1">
    <property type="nucleotide sequence ID" value="NC_003103.1"/>
</dbReference>
<dbReference type="SMR" id="Q92I58"/>
<dbReference type="CAZy" id="GT28">
    <property type="family name" value="Glycosyltransferase Family 28"/>
</dbReference>
<dbReference type="GeneID" id="928764"/>
<dbReference type="KEGG" id="rco:RC0562"/>
<dbReference type="PATRIC" id="fig|272944.4.peg.641"/>
<dbReference type="HOGENOM" id="CLU_037404_2_1_5"/>
<dbReference type="UniPathway" id="UPA00219"/>
<dbReference type="Proteomes" id="UP000000816">
    <property type="component" value="Chromosome"/>
</dbReference>
<dbReference type="GO" id="GO:0005886">
    <property type="term" value="C:plasma membrane"/>
    <property type="evidence" value="ECO:0007669"/>
    <property type="project" value="UniProtKB-SubCell"/>
</dbReference>
<dbReference type="GO" id="GO:0051991">
    <property type="term" value="F:UDP-N-acetyl-D-glucosamine:N-acetylmuramoyl-L-alanyl-D-glutamyl-meso-2,6-diaminopimelyl-D-alanyl-D-alanine-diphosphoundecaprenol 4-beta-N-acetylglucosaminlytransferase activity"/>
    <property type="evidence" value="ECO:0007669"/>
    <property type="project" value="RHEA"/>
</dbReference>
<dbReference type="GO" id="GO:0050511">
    <property type="term" value="F:undecaprenyldiphospho-muramoylpentapeptide beta-N-acetylglucosaminyltransferase activity"/>
    <property type="evidence" value="ECO:0007669"/>
    <property type="project" value="UniProtKB-UniRule"/>
</dbReference>
<dbReference type="GO" id="GO:0005975">
    <property type="term" value="P:carbohydrate metabolic process"/>
    <property type="evidence" value="ECO:0007669"/>
    <property type="project" value="InterPro"/>
</dbReference>
<dbReference type="GO" id="GO:0051301">
    <property type="term" value="P:cell division"/>
    <property type="evidence" value="ECO:0007669"/>
    <property type="project" value="UniProtKB-KW"/>
</dbReference>
<dbReference type="GO" id="GO:0071555">
    <property type="term" value="P:cell wall organization"/>
    <property type="evidence" value="ECO:0007669"/>
    <property type="project" value="UniProtKB-KW"/>
</dbReference>
<dbReference type="GO" id="GO:0030259">
    <property type="term" value="P:lipid glycosylation"/>
    <property type="evidence" value="ECO:0007669"/>
    <property type="project" value="UniProtKB-UniRule"/>
</dbReference>
<dbReference type="GO" id="GO:0009252">
    <property type="term" value="P:peptidoglycan biosynthetic process"/>
    <property type="evidence" value="ECO:0007669"/>
    <property type="project" value="UniProtKB-UniRule"/>
</dbReference>
<dbReference type="GO" id="GO:0008360">
    <property type="term" value="P:regulation of cell shape"/>
    <property type="evidence" value="ECO:0007669"/>
    <property type="project" value="UniProtKB-KW"/>
</dbReference>
<dbReference type="CDD" id="cd03785">
    <property type="entry name" value="GT28_MurG"/>
    <property type="match status" value="1"/>
</dbReference>
<dbReference type="Gene3D" id="3.40.50.2000">
    <property type="entry name" value="Glycogen Phosphorylase B"/>
    <property type="match status" value="2"/>
</dbReference>
<dbReference type="HAMAP" id="MF_00033">
    <property type="entry name" value="MurG"/>
    <property type="match status" value="1"/>
</dbReference>
<dbReference type="InterPro" id="IPR006009">
    <property type="entry name" value="GlcNAc_MurG"/>
</dbReference>
<dbReference type="InterPro" id="IPR007235">
    <property type="entry name" value="Glyco_trans_28_C"/>
</dbReference>
<dbReference type="InterPro" id="IPR004276">
    <property type="entry name" value="GlycoTrans_28_N"/>
</dbReference>
<dbReference type="InterPro" id="IPR022439">
    <property type="entry name" value="RPE4"/>
</dbReference>
<dbReference type="NCBIfam" id="TIGR01133">
    <property type="entry name" value="murG"/>
    <property type="match status" value="1"/>
</dbReference>
<dbReference type="NCBIfam" id="TIGR03777">
    <property type="entry name" value="RPE4"/>
    <property type="match status" value="1"/>
</dbReference>
<dbReference type="PANTHER" id="PTHR21015:SF22">
    <property type="entry name" value="GLYCOSYLTRANSFERASE"/>
    <property type="match status" value="1"/>
</dbReference>
<dbReference type="PANTHER" id="PTHR21015">
    <property type="entry name" value="UDP-N-ACETYLGLUCOSAMINE--N-ACETYLMURAMYL-(PENTAPEPTIDE) PYROPHOSPHORYL-UNDECAPRENOL N-ACETYLGLUCOSAMINE TRANSFERASE 1"/>
    <property type="match status" value="1"/>
</dbReference>
<dbReference type="Pfam" id="PF04101">
    <property type="entry name" value="Glyco_tran_28_C"/>
    <property type="match status" value="1"/>
</dbReference>
<dbReference type="Pfam" id="PF03033">
    <property type="entry name" value="Glyco_transf_28"/>
    <property type="match status" value="1"/>
</dbReference>
<dbReference type="SUPFAM" id="SSF53756">
    <property type="entry name" value="UDP-Glycosyltransferase/glycogen phosphorylase"/>
    <property type="match status" value="1"/>
</dbReference>
<protein>
    <recommendedName>
        <fullName evidence="1">UDP-N-acetylglucosamine--N-acetylmuramyl-(pentapeptide) pyrophosphoryl-undecaprenol N-acetylglucosamine transferase</fullName>
        <ecNumber evidence="1">2.4.1.227</ecNumber>
    </recommendedName>
    <alternativeName>
        <fullName evidence="1">Undecaprenyl-PP-MurNAc-pentapeptide-UDPGlcNAc GlcNAc transferase</fullName>
    </alternativeName>
</protein>
<name>MURG_RICCN</name>
<proteinExistence type="inferred from homology"/>
<reference key="1">
    <citation type="journal article" date="2001" name="Science">
        <title>Mechanisms of evolution in Rickettsia conorii and R. prowazekii.</title>
        <authorList>
            <person name="Ogata H."/>
            <person name="Audic S."/>
            <person name="Renesto-Audiffren P."/>
            <person name="Fournier P.-E."/>
            <person name="Barbe V."/>
            <person name="Samson D."/>
            <person name="Roux V."/>
            <person name="Cossart P."/>
            <person name="Weissenbach J."/>
            <person name="Claverie J.-M."/>
            <person name="Raoult D."/>
        </authorList>
    </citation>
    <scope>NUCLEOTIDE SEQUENCE [LARGE SCALE GENOMIC DNA]</scope>
    <source>
        <strain>ATCC VR-613 / Malish 7</strain>
    </source>
</reference>
<accession>Q92I58</accession>
<keyword id="KW-0131">Cell cycle</keyword>
<keyword id="KW-0132">Cell division</keyword>
<keyword id="KW-0997">Cell inner membrane</keyword>
<keyword id="KW-1003">Cell membrane</keyword>
<keyword id="KW-0133">Cell shape</keyword>
<keyword id="KW-0961">Cell wall biogenesis/degradation</keyword>
<keyword id="KW-0328">Glycosyltransferase</keyword>
<keyword id="KW-0472">Membrane</keyword>
<keyword id="KW-0573">Peptidoglycan synthesis</keyword>
<keyword id="KW-0808">Transferase</keyword>
<evidence type="ECO:0000255" key="1">
    <source>
        <dbReference type="HAMAP-Rule" id="MF_00033"/>
    </source>
</evidence>